<proteinExistence type="evidence at protein level"/>
<comment type="function">
    <text>NDH-1 shuttles electrons from NADH, via FMN and iron-sulfur (Fe-S) centers, to quinones in the respiratory chain. The immediate electron acceptor for the enzyme in this species is menaquinone. Couples the redox reaction to proton translocation (for every two electrons transferred, four hydrogen ions are translocated across the cytoplasmic membrane), and thus conserves the redox energy in a proton gradient required for the synthesis of ATP.</text>
</comment>
<comment type="catalytic activity">
    <reaction>
        <text>a quinone + NADH + 5 H(+)(in) = a quinol + NAD(+) + 4 H(+)(out)</text>
        <dbReference type="Rhea" id="RHEA:57888"/>
        <dbReference type="ChEBI" id="CHEBI:15378"/>
        <dbReference type="ChEBI" id="CHEBI:24646"/>
        <dbReference type="ChEBI" id="CHEBI:57540"/>
        <dbReference type="ChEBI" id="CHEBI:57945"/>
        <dbReference type="ChEBI" id="CHEBI:132124"/>
    </reaction>
</comment>
<comment type="cofactor">
    <cofactor evidence="1">
        <name>[2Fe-2S] cluster</name>
        <dbReference type="ChEBI" id="CHEBI:190135"/>
    </cofactor>
    <text evidence="1">Binds 1 [2Fe-2S] cluster. This [2Fe-2S] cluster is referred to as N1a.</text>
</comment>
<comment type="subunit">
    <text evidence="1 2">NDH-1 is composed of 15 different subunits, Nqo1 to Nqo15. The complex has a L-shaped structure, with the hydrophobic arm (subunits Nqo7, Nqo8 and Nqo10 to Nqo14) embedded in the membrane and the hydrophilic peripheral arm (subunits Nqo1 to Nqo6, Nqo9 and Nqo15) protruding into the bacterial cytoplasm. The hydrophilic domain contains all the redox centers.</text>
</comment>
<comment type="subcellular location">
    <subcellularLocation>
        <location evidence="4">Cell membrane</location>
        <topology evidence="4">Peripheral membrane protein</topology>
        <orientation evidence="4">Cytoplasmic side</orientation>
    </subcellularLocation>
</comment>
<comment type="domain">
    <text evidence="1">The subunit can be divided into two domains: an N-terminal four-helical bundle (residues 2 to 74) involved in interactions with subunits Nqo1 and Nqo3, and a thioredoxin-like C-terminal domain (residues 75 to 180) that coordinates the binuclear cluster N1a.</text>
</comment>
<comment type="similarity">
    <text evidence="3">Belongs to the complex I 24 kDa subunit family.</text>
</comment>
<keyword id="KW-0001">2Fe-2S</keyword>
<keyword id="KW-0002">3D-structure</keyword>
<keyword id="KW-1003">Cell membrane</keyword>
<keyword id="KW-0903">Direct protein sequencing</keyword>
<keyword id="KW-1015">Disulfide bond</keyword>
<keyword id="KW-0408">Iron</keyword>
<keyword id="KW-0411">Iron-sulfur</keyword>
<keyword id="KW-0472">Membrane</keyword>
<keyword id="KW-0479">Metal-binding</keyword>
<keyword id="KW-0520">NAD</keyword>
<keyword id="KW-0874">Quinone</keyword>
<keyword id="KW-1185">Reference proteome</keyword>
<keyword id="KW-1278">Translocase</keyword>
<protein>
    <recommendedName>
        <fullName>NADH-quinone oxidoreductase subunit 2</fullName>
        <ecNumber>7.1.1.-</ecNumber>
    </recommendedName>
    <alternativeName>
        <fullName>NADH dehydrogenase I chain 2</fullName>
    </alternativeName>
    <alternativeName>
        <fullName>NDH-1 subunit 2</fullName>
    </alternativeName>
</protein>
<feature type="initiator methionine" description="Removed" evidence="2">
    <location>
        <position position="1"/>
    </location>
</feature>
<feature type="chain" id="PRO_0000118686" description="NADH-quinone oxidoreductase subunit 2">
    <location>
        <begin position="2"/>
        <end position="181"/>
    </location>
</feature>
<feature type="binding site" evidence="1">
    <location>
        <position position="83"/>
    </location>
    <ligand>
        <name>[2Fe-2S] cluster</name>
        <dbReference type="ChEBI" id="CHEBI:190135"/>
    </ligand>
</feature>
<feature type="binding site" evidence="1">
    <location>
        <position position="87"/>
    </location>
    <ligand>
        <name>[2Fe-2S] cluster</name>
        <dbReference type="ChEBI" id="CHEBI:190135"/>
    </ligand>
</feature>
<feature type="binding site" evidence="1">
    <location>
        <position position="88"/>
    </location>
    <ligand>
        <name>[2Fe-2S] cluster</name>
        <dbReference type="ChEBI" id="CHEBI:190135"/>
    </ligand>
</feature>
<feature type="binding site" evidence="1">
    <location>
        <position position="124"/>
    </location>
    <ligand>
        <name>[2Fe-2S] cluster</name>
        <dbReference type="ChEBI" id="CHEBI:190135"/>
    </ligand>
</feature>
<feature type="binding site" evidence="1">
    <location>
        <position position="128"/>
    </location>
    <ligand>
        <name>[2Fe-2S] cluster</name>
        <dbReference type="ChEBI" id="CHEBI:190135"/>
    </ligand>
</feature>
<feature type="disulfide bond" evidence="1">
    <location>
        <begin position="144"/>
        <end position="172"/>
    </location>
</feature>
<feature type="turn" evidence="5">
    <location>
        <begin position="4"/>
        <end position="6"/>
    </location>
</feature>
<feature type="helix" evidence="5">
    <location>
        <begin position="8"/>
        <end position="15"/>
    </location>
</feature>
<feature type="helix" evidence="5">
    <location>
        <begin position="24"/>
        <end position="26"/>
    </location>
</feature>
<feature type="helix" evidence="5">
    <location>
        <begin position="27"/>
        <end position="38"/>
    </location>
</feature>
<feature type="helix" evidence="5">
    <location>
        <begin position="43"/>
        <end position="53"/>
    </location>
</feature>
<feature type="helix" evidence="5">
    <location>
        <begin position="57"/>
        <end position="64"/>
    </location>
</feature>
<feature type="strand" evidence="7">
    <location>
        <begin position="67"/>
        <end position="69"/>
    </location>
</feature>
<feature type="strand" evidence="5">
    <location>
        <begin position="77"/>
        <end position="83"/>
    </location>
</feature>
<feature type="helix" evidence="5">
    <location>
        <begin position="86"/>
        <end position="89"/>
    </location>
</feature>
<feature type="turn" evidence="5">
    <location>
        <begin position="90"/>
        <end position="92"/>
    </location>
</feature>
<feature type="helix" evidence="5">
    <location>
        <begin position="93"/>
        <end position="104"/>
    </location>
</feature>
<feature type="strand" evidence="7">
    <location>
        <begin position="108"/>
        <end position="111"/>
    </location>
</feature>
<feature type="strand" evidence="5">
    <location>
        <begin position="117"/>
        <end position="123"/>
    </location>
</feature>
<feature type="helix" evidence="5">
    <location>
        <begin position="128"/>
        <end position="130"/>
    </location>
</feature>
<feature type="strand" evidence="6">
    <location>
        <begin position="132"/>
        <end position="135"/>
    </location>
</feature>
<feature type="strand" evidence="5">
    <location>
        <begin position="137"/>
        <end position="139"/>
    </location>
</feature>
<feature type="strand" evidence="6">
    <location>
        <begin position="142"/>
        <end position="144"/>
    </location>
</feature>
<feature type="helix" evidence="5">
    <location>
        <begin position="147"/>
        <end position="158"/>
    </location>
</feature>
<feature type="helix" evidence="5">
    <location>
        <begin position="163"/>
        <end position="165"/>
    </location>
</feature>
<feature type="strand" evidence="5">
    <location>
        <begin position="174"/>
        <end position="176"/>
    </location>
</feature>
<organism>
    <name type="scientific">Thermus thermophilus (strain ATCC 27634 / DSM 579 / HB8)</name>
    <dbReference type="NCBI Taxonomy" id="300852"/>
    <lineage>
        <taxon>Bacteria</taxon>
        <taxon>Thermotogati</taxon>
        <taxon>Deinococcota</taxon>
        <taxon>Deinococci</taxon>
        <taxon>Thermales</taxon>
        <taxon>Thermaceae</taxon>
        <taxon>Thermus</taxon>
    </lineage>
</organism>
<sequence length="181" mass="20286">MGFFDDKQDFLEETFAKYPPEGRRAAIMPLLRRVQQEEGWIRPERIEEIARLVGTTPTEVMGVASFYSYYQFVPTGKYHLQVCATLSCKLAGAEELWDYLTETLGIGPGEVTPDGLFSVQKVECLGSCHTAPVIQVNDEPYVECVTRARLEALLAGLRAGKRLEEIELPGKCGHHVHEVEV</sequence>
<name>NQO2_THET8</name>
<gene>
    <name type="primary">nqo2</name>
    <name type="ordered locus">TTHA0088</name>
</gene>
<evidence type="ECO:0000269" key="1">
    <source>
    </source>
</evidence>
<evidence type="ECO:0000269" key="2">
    <source>
    </source>
</evidence>
<evidence type="ECO:0000305" key="3"/>
<evidence type="ECO:0000305" key="4">
    <source>
    </source>
</evidence>
<evidence type="ECO:0007829" key="5">
    <source>
        <dbReference type="PDB" id="3I9V"/>
    </source>
</evidence>
<evidence type="ECO:0007829" key="6">
    <source>
        <dbReference type="PDB" id="3IAM"/>
    </source>
</evidence>
<evidence type="ECO:0007829" key="7">
    <source>
        <dbReference type="PDB" id="6Y11"/>
    </source>
</evidence>
<reference key="1">
    <citation type="journal article" date="1997" name="J. Biol. Chem.">
        <title>The proton-translocating NADH-quinone oxidoreductase (NDH-1) of thermophilic bacterium Thermus thermophilus HB-8. Complete DNA sequence of the gene cluster and thermostable properties of the expressed NQO2 subunit.</title>
        <authorList>
            <person name="Yano T."/>
            <person name="Chu S.S."/>
            <person name="Sled' V.D."/>
            <person name="Ohnishi T."/>
            <person name="Yagi T."/>
        </authorList>
    </citation>
    <scope>NUCLEOTIDE SEQUENCE [GENOMIC DNA]</scope>
    <scope>CHARACTERIZATION</scope>
    <source>
        <strain>ATCC 27634 / DSM 579 / HB8</strain>
    </source>
</reference>
<reference key="2">
    <citation type="submission" date="2004-11" db="EMBL/GenBank/DDBJ databases">
        <title>Complete genome sequence of Thermus thermophilus HB8.</title>
        <authorList>
            <person name="Masui R."/>
            <person name="Kurokawa K."/>
            <person name="Nakagawa N."/>
            <person name="Tokunaga F."/>
            <person name="Koyama Y."/>
            <person name="Shibata T."/>
            <person name="Oshima T."/>
            <person name="Yokoyama S."/>
            <person name="Yasunaga T."/>
            <person name="Kuramitsu S."/>
        </authorList>
    </citation>
    <scope>NUCLEOTIDE SEQUENCE [LARGE SCALE GENOMIC DNA]</scope>
    <source>
        <strain>ATCC 27634 / DSM 579 / HB8</strain>
    </source>
</reference>
<reference key="3">
    <citation type="journal article" date="2006" name="Biochemistry">
        <title>Identification of a novel subunit of respiratory complex I from Thermus thermophilus.</title>
        <authorList>
            <person name="Hinchliffe P."/>
            <person name="Carroll J."/>
            <person name="Sazanov L.A."/>
        </authorList>
    </citation>
    <scope>PROTEIN SEQUENCE OF 2-9</scope>
    <scope>IDENTIFICATION BY MASS SPECTROMETRY</scope>
    <scope>FUNCTION</scope>
    <scope>EPR SPECTROSCOPY</scope>
    <scope>SUBUNIT</scope>
    <source>
        <strain>ATCC 27634 / DSM 579 / HB8</strain>
    </source>
</reference>
<reference key="4">
    <citation type="journal article" date="2006" name="Science">
        <title>Structure of the hydrophilic domain of respiratory complex I from Thermus thermophilus.</title>
        <authorList>
            <person name="Sazanov L.A."/>
            <person name="Hinchliffe P."/>
        </authorList>
    </citation>
    <scope>X-RAY CRYSTALLOGRAPHY (3.3 ANGSTROMS) OF ENZYME HYDROPHILIC DOMAIN IN COMPLEX WITH 2FE-2S CLUSTER</scope>
    <scope>FUNCTION</scope>
    <scope>SUBUNIT</scope>
    <scope>SUBCELLULAR LOCATION</scope>
    <scope>DOMAIN</scope>
    <scope>ELECTRON TRANSFER MECHANISM</scope>
    <scope>DISULFIDE BOND</scope>
</reference>
<accession>Q56221</accession>
<accession>Q5SM55</accession>
<dbReference type="EC" id="7.1.1.-"/>
<dbReference type="EMBL" id="U52917">
    <property type="protein sequence ID" value="AAA97942.1"/>
    <property type="molecule type" value="Genomic_DNA"/>
</dbReference>
<dbReference type="EMBL" id="AP008226">
    <property type="protein sequence ID" value="BAD69911.1"/>
    <property type="molecule type" value="Genomic_DNA"/>
</dbReference>
<dbReference type="PIR" id="T11902">
    <property type="entry name" value="T11902"/>
</dbReference>
<dbReference type="RefSeq" id="YP_143354.1">
    <property type="nucleotide sequence ID" value="NC_006461.1"/>
</dbReference>
<dbReference type="PDB" id="2FUG">
    <property type="method" value="X-ray"/>
    <property type="resolution" value="3.30 A"/>
    <property type="chains" value="2/B/K/T=1-181"/>
</dbReference>
<dbReference type="PDB" id="2YBB">
    <property type="method" value="EM"/>
    <property type="resolution" value="19.00 A"/>
    <property type="chains" value="2=1-181"/>
</dbReference>
<dbReference type="PDB" id="3I9V">
    <property type="method" value="X-ray"/>
    <property type="resolution" value="3.10 A"/>
    <property type="chains" value="2/B=1-181"/>
</dbReference>
<dbReference type="PDB" id="3IAM">
    <property type="method" value="X-ray"/>
    <property type="resolution" value="3.10 A"/>
    <property type="chains" value="2/B=1-181"/>
</dbReference>
<dbReference type="PDB" id="3IAS">
    <property type="method" value="X-ray"/>
    <property type="resolution" value="3.15 A"/>
    <property type="chains" value="2/B/K/T=1-181"/>
</dbReference>
<dbReference type="PDB" id="3M9S">
    <property type="method" value="X-ray"/>
    <property type="resolution" value="4.50 A"/>
    <property type="chains" value="2/B=1-181"/>
</dbReference>
<dbReference type="PDB" id="4HEA">
    <property type="method" value="X-ray"/>
    <property type="resolution" value="3.30 A"/>
    <property type="chains" value="2/C=1-181"/>
</dbReference>
<dbReference type="PDB" id="6I0D">
    <property type="method" value="X-ray"/>
    <property type="resolution" value="3.60 A"/>
    <property type="chains" value="2/C=1-181"/>
</dbReference>
<dbReference type="PDB" id="6I1P">
    <property type="method" value="X-ray"/>
    <property type="resolution" value="3.21 A"/>
    <property type="chains" value="2/C=1-181"/>
</dbReference>
<dbReference type="PDB" id="6Q8O">
    <property type="method" value="X-ray"/>
    <property type="resolution" value="3.60 A"/>
    <property type="chains" value="2/C=1-181"/>
</dbReference>
<dbReference type="PDB" id="6Q8W">
    <property type="method" value="X-ray"/>
    <property type="resolution" value="3.40 A"/>
    <property type="chains" value="2/C=1-181"/>
</dbReference>
<dbReference type="PDB" id="6Q8X">
    <property type="method" value="X-ray"/>
    <property type="resolution" value="3.51 A"/>
    <property type="chains" value="2/C=1-181"/>
</dbReference>
<dbReference type="PDB" id="6Y11">
    <property type="method" value="X-ray"/>
    <property type="resolution" value="3.11 A"/>
    <property type="chains" value="2/C=1-181"/>
</dbReference>
<dbReference type="PDB" id="6ZIY">
    <property type="method" value="EM"/>
    <property type="resolution" value="4.25 A"/>
    <property type="chains" value="2=1-181"/>
</dbReference>
<dbReference type="PDB" id="6ZJL">
    <property type="method" value="EM"/>
    <property type="resolution" value="4.30 A"/>
    <property type="chains" value="2=1-181"/>
</dbReference>
<dbReference type="PDB" id="6ZJN">
    <property type="method" value="EM"/>
    <property type="resolution" value="6.10 A"/>
    <property type="chains" value="2=1-181"/>
</dbReference>
<dbReference type="PDB" id="6ZJY">
    <property type="method" value="EM"/>
    <property type="resolution" value="5.50 A"/>
    <property type="chains" value="2=1-181"/>
</dbReference>
<dbReference type="PDBsum" id="2FUG"/>
<dbReference type="PDBsum" id="2YBB"/>
<dbReference type="PDBsum" id="3I9V"/>
<dbReference type="PDBsum" id="3IAM"/>
<dbReference type="PDBsum" id="3IAS"/>
<dbReference type="PDBsum" id="3M9S"/>
<dbReference type="PDBsum" id="4HEA"/>
<dbReference type="PDBsum" id="6I0D"/>
<dbReference type="PDBsum" id="6I1P"/>
<dbReference type="PDBsum" id="6Q8O"/>
<dbReference type="PDBsum" id="6Q8W"/>
<dbReference type="PDBsum" id="6Q8X"/>
<dbReference type="PDBsum" id="6Y11"/>
<dbReference type="PDBsum" id="6ZIY"/>
<dbReference type="PDBsum" id="6ZJL"/>
<dbReference type="PDBsum" id="6ZJN"/>
<dbReference type="PDBsum" id="6ZJY"/>
<dbReference type="EMDB" id="EMD-11231"/>
<dbReference type="EMDB" id="EMD-11235"/>
<dbReference type="EMDB" id="EMD-11237"/>
<dbReference type="EMDB" id="EMD-11238"/>
<dbReference type="SMR" id="Q56221"/>
<dbReference type="DIP" id="DIP-59260N"/>
<dbReference type="IntAct" id="Q56221">
    <property type="interactions" value="1"/>
</dbReference>
<dbReference type="TCDB" id="3.D.1.3.1">
    <property type="family name" value="the h+ or na+-translocating nadh dehydrogenase (ndh) family"/>
</dbReference>
<dbReference type="EnsemblBacteria" id="BAD69911">
    <property type="protein sequence ID" value="BAD69911"/>
    <property type="gene ID" value="BAD69911"/>
</dbReference>
<dbReference type="GeneID" id="3168326"/>
<dbReference type="KEGG" id="ttj:TTHA0088"/>
<dbReference type="PATRIC" id="fig|300852.9.peg.86"/>
<dbReference type="eggNOG" id="COG1905">
    <property type="taxonomic scope" value="Bacteria"/>
</dbReference>
<dbReference type="HOGENOM" id="CLU_054362_2_0_0"/>
<dbReference type="PhylomeDB" id="Q56221"/>
<dbReference type="EvolutionaryTrace" id="Q56221"/>
<dbReference type="Proteomes" id="UP000000532">
    <property type="component" value="Chromosome"/>
</dbReference>
<dbReference type="GO" id="GO:0005886">
    <property type="term" value="C:plasma membrane"/>
    <property type="evidence" value="ECO:0007669"/>
    <property type="project" value="UniProtKB-SubCell"/>
</dbReference>
<dbReference type="GO" id="GO:0051537">
    <property type="term" value="F:2 iron, 2 sulfur cluster binding"/>
    <property type="evidence" value="ECO:0007669"/>
    <property type="project" value="UniProtKB-KW"/>
</dbReference>
<dbReference type="GO" id="GO:0046872">
    <property type="term" value="F:metal ion binding"/>
    <property type="evidence" value="ECO:0007669"/>
    <property type="project" value="UniProtKB-KW"/>
</dbReference>
<dbReference type="GO" id="GO:0003954">
    <property type="term" value="F:NADH dehydrogenase activity"/>
    <property type="evidence" value="ECO:0007669"/>
    <property type="project" value="TreeGrafter"/>
</dbReference>
<dbReference type="GO" id="GO:0048038">
    <property type="term" value="F:quinone binding"/>
    <property type="evidence" value="ECO:0007669"/>
    <property type="project" value="UniProtKB-KW"/>
</dbReference>
<dbReference type="CDD" id="cd03064">
    <property type="entry name" value="TRX_Fd_NuoE"/>
    <property type="match status" value="1"/>
</dbReference>
<dbReference type="FunFam" id="1.10.10.1590:FF:000001">
    <property type="entry name" value="NADH-quinone oxidoreductase subunit E"/>
    <property type="match status" value="1"/>
</dbReference>
<dbReference type="Gene3D" id="3.40.30.10">
    <property type="entry name" value="Glutaredoxin"/>
    <property type="match status" value="1"/>
</dbReference>
<dbReference type="Gene3D" id="1.10.10.1590">
    <property type="entry name" value="NADH-quinone oxidoreductase subunit E"/>
    <property type="match status" value="1"/>
</dbReference>
<dbReference type="InterPro" id="IPR002023">
    <property type="entry name" value="NuoE-like"/>
</dbReference>
<dbReference type="InterPro" id="IPR042128">
    <property type="entry name" value="NuoE_dom"/>
</dbReference>
<dbReference type="InterPro" id="IPR041921">
    <property type="entry name" value="NuoE_N"/>
</dbReference>
<dbReference type="InterPro" id="IPR036249">
    <property type="entry name" value="Thioredoxin-like_sf"/>
</dbReference>
<dbReference type="NCBIfam" id="TIGR01958">
    <property type="entry name" value="nuoE_fam"/>
    <property type="match status" value="1"/>
</dbReference>
<dbReference type="PANTHER" id="PTHR10371:SF3">
    <property type="entry name" value="NADH DEHYDROGENASE [UBIQUINONE] FLAVOPROTEIN 2, MITOCHONDRIAL"/>
    <property type="match status" value="1"/>
</dbReference>
<dbReference type="PANTHER" id="PTHR10371">
    <property type="entry name" value="NADH DEHYDROGENASE UBIQUINONE FLAVOPROTEIN 2, MITOCHONDRIAL"/>
    <property type="match status" value="1"/>
</dbReference>
<dbReference type="Pfam" id="PF01257">
    <property type="entry name" value="2Fe-2S_thioredx"/>
    <property type="match status" value="1"/>
</dbReference>
<dbReference type="PIRSF" id="PIRSF000216">
    <property type="entry name" value="NADH_DH_24kDa"/>
    <property type="match status" value="1"/>
</dbReference>
<dbReference type="SUPFAM" id="SSF52833">
    <property type="entry name" value="Thioredoxin-like"/>
    <property type="match status" value="1"/>
</dbReference>
<dbReference type="PROSITE" id="PS01099">
    <property type="entry name" value="COMPLEX1_24K"/>
    <property type="match status" value="1"/>
</dbReference>